<accession>P36089</accession>
<sequence length="147" mass="16669">MAWEGTYERLFFLALGSSYHVPSLANNIMNFLEGARLYKKNTTYVATLIYEFIILNDASMTPDVKCFWLPVKLPHFLLLSELYSIIEKYKLAKVYYNRGTYDVHTVSANSLVISGSMPTGIIIGSSSPLDYVGVQVNRQLEMDLPIE</sequence>
<evidence type="ECO:0000305" key="1"/>
<evidence type="ECO:0000305" key="2">
    <source>
    </source>
</evidence>
<comment type="miscellaneous">
    <text evidence="1">Partially overlaps YNK1.</text>
</comment>
<comment type="caution">
    <text evidence="2">Product of a dubious gene prediction unlikely to encode a functional protein. Because of that it is not part of the S.cerevisiae S288c complete/reference proteome set.</text>
</comment>
<dbReference type="EMBL" id="X75780">
    <property type="protein sequence ID" value="CAA53408.1"/>
    <property type="molecule type" value="Genomic_DNA"/>
</dbReference>
<dbReference type="EMBL" id="Z28066">
    <property type="protein sequence ID" value="CAA81903.1"/>
    <property type="molecule type" value="Genomic_DNA"/>
</dbReference>
<dbReference type="PIR" id="S37888">
    <property type="entry name" value="S37888"/>
</dbReference>
<dbReference type="IntAct" id="P36089">
    <property type="interactions" value="2"/>
</dbReference>
<dbReference type="STRING" id="4932.YKL066W"/>
<dbReference type="PaxDb" id="4932-YKL066W"/>
<dbReference type="EnsemblFungi" id="YKL066W_mRNA">
    <property type="protein sequence ID" value="YKL066W"/>
    <property type="gene ID" value="YKL066W"/>
</dbReference>
<dbReference type="AGR" id="SGD:S000001549"/>
<dbReference type="SGD" id="S000001549">
    <property type="gene designation" value="YKL066W"/>
</dbReference>
<dbReference type="HOGENOM" id="CLU_1769538_0_0_1"/>
<dbReference type="ChiTaRS" id="YKL066W">
    <property type="organism name" value="yeast"/>
</dbReference>
<protein>
    <recommendedName>
        <fullName>Putative uncharacterized protein YKL066W</fullName>
    </recommendedName>
</protein>
<feature type="chain" id="PRO_0000203173" description="Putative uncharacterized protein YKL066W">
    <location>
        <begin position="1"/>
        <end position="147"/>
    </location>
</feature>
<reference key="1">
    <citation type="journal article" date="1994" name="Yeast">
        <title>Sequence of a 20.7 kb region of yeast chromosome XI includes the NUP100 gene, an open reading frame (ORF) possibly representing a nucleoside diphosphate kinase gene, tRNAs for His, Val and Trp in addition to seven ORFs with weak or no significant similarity to known proteins.</title>
        <authorList>
            <person name="Rasmussen S.W."/>
        </authorList>
    </citation>
    <scope>NUCLEOTIDE SEQUENCE [GENOMIC DNA]</scope>
    <source>
        <strain>ATCC 204508 / S288c</strain>
    </source>
</reference>
<reference key="2">
    <citation type="journal article" date="1994" name="Nature">
        <title>Complete DNA sequence of yeast chromosome XI.</title>
        <authorList>
            <person name="Dujon B."/>
            <person name="Alexandraki D."/>
            <person name="Andre B."/>
            <person name="Ansorge W."/>
            <person name="Baladron V."/>
            <person name="Ballesta J.P.G."/>
            <person name="Banrevi A."/>
            <person name="Bolle P.-A."/>
            <person name="Bolotin-Fukuhara M."/>
            <person name="Bossier P."/>
            <person name="Bou G."/>
            <person name="Boyer J."/>
            <person name="Buitrago M.J."/>
            <person name="Cheret G."/>
            <person name="Colleaux L."/>
            <person name="Daignan-Fornier B."/>
            <person name="del Rey F."/>
            <person name="Dion C."/>
            <person name="Domdey H."/>
            <person name="Duesterhoeft A."/>
            <person name="Duesterhus S."/>
            <person name="Entian K.-D."/>
            <person name="Erfle H."/>
            <person name="Esteban P.F."/>
            <person name="Feldmann H."/>
            <person name="Fernandes L."/>
            <person name="Fobo G.M."/>
            <person name="Fritz C."/>
            <person name="Fukuhara H."/>
            <person name="Gabel C."/>
            <person name="Gaillon L."/>
            <person name="Garcia-Cantalejo J.M."/>
            <person name="Garcia-Ramirez J.J."/>
            <person name="Gent M.E."/>
            <person name="Ghazvini M."/>
            <person name="Goffeau A."/>
            <person name="Gonzalez A."/>
            <person name="Grothues D."/>
            <person name="Guerreiro P."/>
            <person name="Hegemann J.H."/>
            <person name="Hewitt N."/>
            <person name="Hilger F."/>
            <person name="Hollenberg C.P."/>
            <person name="Horaitis O."/>
            <person name="Indge K.J."/>
            <person name="Jacquier A."/>
            <person name="James C.M."/>
            <person name="Jauniaux J.-C."/>
            <person name="Jimenez A."/>
            <person name="Keuchel H."/>
            <person name="Kirchrath L."/>
            <person name="Kleine K."/>
            <person name="Koetter P."/>
            <person name="Legrain P."/>
            <person name="Liebl S."/>
            <person name="Louis E.J."/>
            <person name="Maia e Silva A."/>
            <person name="Marck C."/>
            <person name="Monnier A.-L."/>
            <person name="Moestl D."/>
            <person name="Mueller S."/>
            <person name="Obermaier B."/>
            <person name="Oliver S.G."/>
            <person name="Pallier C."/>
            <person name="Pascolo S."/>
            <person name="Pfeiffer F."/>
            <person name="Philippsen P."/>
            <person name="Planta R.J."/>
            <person name="Pohl F.M."/>
            <person name="Pohl T.M."/>
            <person name="Poehlmann R."/>
            <person name="Portetelle D."/>
            <person name="Purnelle B."/>
            <person name="Puzos V."/>
            <person name="Ramezani Rad M."/>
            <person name="Rasmussen S.W."/>
            <person name="Remacha M.A."/>
            <person name="Revuelta J.L."/>
            <person name="Richard G.-F."/>
            <person name="Rieger M."/>
            <person name="Rodrigues-Pousada C."/>
            <person name="Rose M."/>
            <person name="Rupp T."/>
            <person name="Santos M.A."/>
            <person name="Schwager C."/>
            <person name="Sensen C."/>
            <person name="Skala J."/>
            <person name="Soares H."/>
            <person name="Sor F."/>
            <person name="Stegemann J."/>
            <person name="Tettelin H."/>
            <person name="Thierry A."/>
            <person name="Tzermia M."/>
            <person name="Urrestarazu L.A."/>
            <person name="van Dyck L."/>
            <person name="van Vliet-Reedijk J.C."/>
            <person name="Valens M."/>
            <person name="Vandenbol M."/>
            <person name="Vilela C."/>
            <person name="Vissers S."/>
            <person name="von Wettstein D."/>
            <person name="Voss H."/>
            <person name="Wiemann S."/>
            <person name="Xu G."/>
            <person name="Zimmermann J."/>
            <person name="Haasemann M."/>
            <person name="Becker I."/>
            <person name="Mewes H.-W."/>
        </authorList>
    </citation>
    <scope>NUCLEOTIDE SEQUENCE [LARGE SCALE GENOMIC DNA]</scope>
    <source>
        <strain>ATCC 204508 / S288c</strain>
    </source>
</reference>
<reference key="3">
    <citation type="journal article" date="2014" name="G3 (Bethesda)">
        <title>The reference genome sequence of Saccharomyces cerevisiae: Then and now.</title>
        <authorList>
            <person name="Engel S.R."/>
            <person name="Dietrich F.S."/>
            <person name="Fisk D.G."/>
            <person name="Binkley G."/>
            <person name="Balakrishnan R."/>
            <person name="Costanzo M.C."/>
            <person name="Dwight S.S."/>
            <person name="Hitz B.C."/>
            <person name="Karra K."/>
            <person name="Nash R.S."/>
            <person name="Weng S."/>
            <person name="Wong E.D."/>
            <person name="Lloyd P."/>
            <person name="Skrzypek M.S."/>
            <person name="Miyasato S.R."/>
            <person name="Simison M."/>
            <person name="Cherry J.M."/>
        </authorList>
    </citation>
    <scope>GENOME REANNOTATION</scope>
    <source>
        <strain>ATCC 204508 / S288c</strain>
    </source>
</reference>
<gene>
    <name type="ordered locus">YKL066W</name>
    <name type="ORF">YKL332</name>
</gene>
<name>YKG6_YEAST</name>
<organism>
    <name type="scientific">Saccharomyces cerevisiae (strain ATCC 204508 / S288c)</name>
    <name type="common">Baker's yeast</name>
    <dbReference type="NCBI Taxonomy" id="559292"/>
    <lineage>
        <taxon>Eukaryota</taxon>
        <taxon>Fungi</taxon>
        <taxon>Dikarya</taxon>
        <taxon>Ascomycota</taxon>
        <taxon>Saccharomycotina</taxon>
        <taxon>Saccharomycetes</taxon>
        <taxon>Saccharomycetales</taxon>
        <taxon>Saccharomycetaceae</taxon>
        <taxon>Saccharomyces</taxon>
    </lineage>
</organism>
<proteinExistence type="uncertain"/>